<evidence type="ECO:0000255" key="1">
    <source>
        <dbReference type="HAMAP-Rule" id="MF_00131"/>
    </source>
</evidence>
<keyword id="KW-0028">Amino-acid biosynthesis</keyword>
<keyword id="KW-0057">Aromatic amino acid biosynthesis</keyword>
<keyword id="KW-0456">Lyase</keyword>
<keyword id="KW-1185">Reference proteome</keyword>
<keyword id="KW-0822">Tryptophan biosynthesis</keyword>
<accession>P66981</accession>
<accession>A0A1R3Y0Y5</accession>
<accession>O06130</accession>
<accession>X2BIP3</accession>
<sequence length="270" mass="27728">MVAVEQSEASRLGPVFDSCRANNRAALIGYLPTGYPDVPASVAAMTALVESGCDIIEVGVPYSDPGMDGPTIARATEAALRGGVRVRDTLAAVEAISIAGGRAVVMTYWNPVLRYGVDAFARDLAAAGGLGLITPDLIPDEAQQWLAASEEHRLDRIFLVAPSSTPERLAATVEASRGFVYAASTMGVTGARDAVSQAAPELVGRVKAVSDIPVGVGLGVRSRAQAAQIAQYADGVIVGSALVTALTEGLPRLRALTGELAAGVRLGMSA</sequence>
<feature type="chain" id="PRO_0000098812" description="Tryptophan synthase alpha chain">
    <location>
        <begin position="1"/>
        <end position="270"/>
    </location>
</feature>
<feature type="active site" description="Proton acceptor" evidence="1">
    <location>
        <position position="57"/>
    </location>
</feature>
<feature type="active site" description="Proton acceptor" evidence="1">
    <location>
        <position position="68"/>
    </location>
</feature>
<organism>
    <name type="scientific">Mycobacterium bovis (strain ATCC BAA-935 / AF2122/97)</name>
    <dbReference type="NCBI Taxonomy" id="233413"/>
    <lineage>
        <taxon>Bacteria</taxon>
        <taxon>Bacillati</taxon>
        <taxon>Actinomycetota</taxon>
        <taxon>Actinomycetes</taxon>
        <taxon>Mycobacteriales</taxon>
        <taxon>Mycobacteriaceae</taxon>
        <taxon>Mycobacterium</taxon>
        <taxon>Mycobacterium tuberculosis complex</taxon>
    </lineage>
</organism>
<protein>
    <recommendedName>
        <fullName evidence="1">Tryptophan synthase alpha chain</fullName>
        <ecNumber evidence="1">4.2.1.20</ecNumber>
    </recommendedName>
</protein>
<name>TRPA_MYCBO</name>
<gene>
    <name evidence="1" type="primary">trpA</name>
    <name type="ordered locus">BQ2027_MB1639</name>
</gene>
<dbReference type="EC" id="4.2.1.20" evidence="1"/>
<dbReference type="EMBL" id="LT708304">
    <property type="protein sequence ID" value="SIU00243.1"/>
    <property type="molecule type" value="Genomic_DNA"/>
</dbReference>
<dbReference type="RefSeq" id="NP_855292.1">
    <property type="nucleotide sequence ID" value="NC_002945.3"/>
</dbReference>
<dbReference type="RefSeq" id="WP_003407999.1">
    <property type="nucleotide sequence ID" value="NC_002945.4"/>
</dbReference>
<dbReference type="SMR" id="P66981"/>
<dbReference type="GeneID" id="45425581"/>
<dbReference type="KEGG" id="mbo:BQ2027_MB1639"/>
<dbReference type="PATRIC" id="fig|233413.5.peg.1788"/>
<dbReference type="UniPathway" id="UPA00035">
    <property type="reaction ID" value="UER00044"/>
</dbReference>
<dbReference type="Proteomes" id="UP000001419">
    <property type="component" value="Chromosome"/>
</dbReference>
<dbReference type="GO" id="GO:0005829">
    <property type="term" value="C:cytosol"/>
    <property type="evidence" value="ECO:0007669"/>
    <property type="project" value="TreeGrafter"/>
</dbReference>
<dbReference type="GO" id="GO:0004834">
    <property type="term" value="F:tryptophan synthase activity"/>
    <property type="evidence" value="ECO:0007669"/>
    <property type="project" value="UniProtKB-UniRule"/>
</dbReference>
<dbReference type="CDD" id="cd04724">
    <property type="entry name" value="Tryptophan_synthase_alpha"/>
    <property type="match status" value="1"/>
</dbReference>
<dbReference type="FunFam" id="3.20.20.70:FF:000037">
    <property type="entry name" value="Tryptophan synthase alpha chain"/>
    <property type="match status" value="1"/>
</dbReference>
<dbReference type="Gene3D" id="3.20.20.70">
    <property type="entry name" value="Aldolase class I"/>
    <property type="match status" value="1"/>
</dbReference>
<dbReference type="HAMAP" id="MF_00131">
    <property type="entry name" value="Trp_synth_alpha"/>
    <property type="match status" value="1"/>
</dbReference>
<dbReference type="InterPro" id="IPR013785">
    <property type="entry name" value="Aldolase_TIM"/>
</dbReference>
<dbReference type="InterPro" id="IPR011060">
    <property type="entry name" value="RibuloseP-bd_barrel"/>
</dbReference>
<dbReference type="InterPro" id="IPR018204">
    <property type="entry name" value="Trp_synthase_alpha_AS"/>
</dbReference>
<dbReference type="InterPro" id="IPR002028">
    <property type="entry name" value="Trp_synthase_suA"/>
</dbReference>
<dbReference type="NCBIfam" id="TIGR00262">
    <property type="entry name" value="trpA"/>
    <property type="match status" value="1"/>
</dbReference>
<dbReference type="PANTHER" id="PTHR43406:SF1">
    <property type="entry name" value="TRYPTOPHAN SYNTHASE ALPHA CHAIN, CHLOROPLASTIC"/>
    <property type="match status" value="1"/>
</dbReference>
<dbReference type="PANTHER" id="PTHR43406">
    <property type="entry name" value="TRYPTOPHAN SYNTHASE, ALPHA CHAIN"/>
    <property type="match status" value="1"/>
</dbReference>
<dbReference type="Pfam" id="PF00290">
    <property type="entry name" value="Trp_syntA"/>
    <property type="match status" value="1"/>
</dbReference>
<dbReference type="SUPFAM" id="SSF51366">
    <property type="entry name" value="Ribulose-phoshate binding barrel"/>
    <property type="match status" value="1"/>
</dbReference>
<dbReference type="PROSITE" id="PS00167">
    <property type="entry name" value="TRP_SYNTHASE_ALPHA"/>
    <property type="match status" value="1"/>
</dbReference>
<reference key="1">
    <citation type="journal article" date="2003" name="Proc. Natl. Acad. Sci. U.S.A.">
        <title>The complete genome sequence of Mycobacterium bovis.</title>
        <authorList>
            <person name="Garnier T."/>
            <person name="Eiglmeier K."/>
            <person name="Camus J.-C."/>
            <person name="Medina N."/>
            <person name="Mansoor H."/>
            <person name="Pryor M."/>
            <person name="Duthoy S."/>
            <person name="Grondin S."/>
            <person name="Lacroix C."/>
            <person name="Monsempe C."/>
            <person name="Simon S."/>
            <person name="Harris B."/>
            <person name="Atkin R."/>
            <person name="Doggett J."/>
            <person name="Mayes R."/>
            <person name="Keating L."/>
            <person name="Wheeler P.R."/>
            <person name="Parkhill J."/>
            <person name="Barrell B.G."/>
            <person name="Cole S.T."/>
            <person name="Gordon S.V."/>
            <person name="Hewinson R.G."/>
        </authorList>
    </citation>
    <scope>NUCLEOTIDE SEQUENCE [LARGE SCALE GENOMIC DNA]</scope>
    <source>
        <strain>ATCC BAA-935 / AF2122/97</strain>
    </source>
</reference>
<reference key="2">
    <citation type="journal article" date="2017" name="Genome Announc.">
        <title>Updated reference genome sequence and annotation of Mycobacterium bovis AF2122/97.</title>
        <authorList>
            <person name="Malone K.M."/>
            <person name="Farrell D."/>
            <person name="Stuber T.P."/>
            <person name="Schubert O.T."/>
            <person name="Aebersold R."/>
            <person name="Robbe-Austerman S."/>
            <person name="Gordon S.V."/>
        </authorList>
    </citation>
    <scope>NUCLEOTIDE SEQUENCE [LARGE SCALE GENOMIC DNA]</scope>
    <scope>GENOME REANNOTATION</scope>
    <source>
        <strain>ATCC BAA-935 / AF2122/97</strain>
    </source>
</reference>
<comment type="function">
    <text evidence="1">The alpha subunit is responsible for the aldol cleavage of indoleglycerol phosphate to indole and glyceraldehyde 3-phosphate.</text>
</comment>
<comment type="catalytic activity">
    <reaction evidence="1">
        <text>(1S,2R)-1-C-(indol-3-yl)glycerol 3-phosphate + L-serine = D-glyceraldehyde 3-phosphate + L-tryptophan + H2O</text>
        <dbReference type="Rhea" id="RHEA:10532"/>
        <dbReference type="ChEBI" id="CHEBI:15377"/>
        <dbReference type="ChEBI" id="CHEBI:33384"/>
        <dbReference type="ChEBI" id="CHEBI:57912"/>
        <dbReference type="ChEBI" id="CHEBI:58866"/>
        <dbReference type="ChEBI" id="CHEBI:59776"/>
        <dbReference type="EC" id="4.2.1.20"/>
    </reaction>
</comment>
<comment type="pathway">
    <text evidence="1">Amino-acid biosynthesis; L-tryptophan biosynthesis; L-tryptophan from chorismate: step 5/5.</text>
</comment>
<comment type="subunit">
    <text evidence="1">Tetramer of two alpha and two beta chains.</text>
</comment>
<comment type="similarity">
    <text evidence="1">Belongs to the TrpA family.</text>
</comment>
<proteinExistence type="inferred from homology"/>